<dbReference type="EC" id="1.1.1.25" evidence="1"/>
<dbReference type="EMBL" id="CP000102">
    <property type="protein sequence ID" value="ABC57045.1"/>
    <property type="molecule type" value="Genomic_DNA"/>
</dbReference>
<dbReference type="RefSeq" id="WP_011406245.1">
    <property type="nucleotide sequence ID" value="NC_007681.1"/>
</dbReference>
<dbReference type="SMR" id="Q2NGK8"/>
<dbReference type="STRING" id="339860.Msp_0647"/>
<dbReference type="GeneID" id="41325222"/>
<dbReference type="KEGG" id="mst:Msp_0647"/>
<dbReference type="eggNOG" id="arCOG01033">
    <property type="taxonomic scope" value="Archaea"/>
</dbReference>
<dbReference type="HOGENOM" id="CLU_044063_4_1_2"/>
<dbReference type="OrthoDB" id="8744at2157"/>
<dbReference type="UniPathway" id="UPA00053">
    <property type="reaction ID" value="UER00087"/>
</dbReference>
<dbReference type="Proteomes" id="UP000001931">
    <property type="component" value="Chromosome"/>
</dbReference>
<dbReference type="GO" id="GO:0050661">
    <property type="term" value="F:NADP binding"/>
    <property type="evidence" value="ECO:0007669"/>
    <property type="project" value="InterPro"/>
</dbReference>
<dbReference type="GO" id="GO:0004764">
    <property type="term" value="F:shikimate 3-dehydrogenase (NADP+) activity"/>
    <property type="evidence" value="ECO:0007669"/>
    <property type="project" value="UniProtKB-UniRule"/>
</dbReference>
<dbReference type="GO" id="GO:0008652">
    <property type="term" value="P:amino acid biosynthetic process"/>
    <property type="evidence" value="ECO:0007669"/>
    <property type="project" value="UniProtKB-KW"/>
</dbReference>
<dbReference type="GO" id="GO:0009073">
    <property type="term" value="P:aromatic amino acid family biosynthetic process"/>
    <property type="evidence" value="ECO:0007669"/>
    <property type="project" value="UniProtKB-KW"/>
</dbReference>
<dbReference type="GO" id="GO:0009423">
    <property type="term" value="P:chorismate biosynthetic process"/>
    <property type="evidence" value="ECO:0007669"/>
    <property type="project" value="UniProtKB-UniRule"/>
</dbReference>
<dbReference type="GO" id="GO:0019632">
    <property type="term" value="P:shikimate metabolic process"/>
    <property type="evidence" value="ECO:0007669"/>
    <property type="project" value="InterPro"/>
</dbReference>
<dbReference type="CDD" id="cd01065">
    <property type="entry name" value="NAD_bind_Shikimate_DH"/>
    <property type="match status" value="1"/>
</dbReference>
<dbReference type="FunFam" id="3.40.50.720:FF:000086">
    <property type="entry name" value="Quinate/shikimate dehydrogenase"/>
    <property type="match status" value="1"/>
</dbReference>
<dbReference type="Gene3D" id="3.40.50.10860">
    <property type="entry name" value="Leucine Dehydrogenase, chain A, domain 1"/>
    <property type="match status" value="1"/>
</dbReference>
<dbReference type="Gene3D" id="3.40.50.720">
    <property type="entry name" value="NAD(P)-binding Rossmann-like Domain"/>
    <property type="match status" value="1"/>
</dbReference>
<dbReference type="HAMAP" id="MF_00222">
    <property type="entry name" value="Shikimate_DH_AroE"/>
    <property type="match status" value="1"/>
</dbReference>
<dbReference type="InterPro" id="IPR046346">
    <property type="entry name" value="Aminoacid_DH-like_N_sf"/>
</dbReference>
<dbReference type="InterPro" id="IPR036291">
    <property type="entry name" value="NAD(P)-bd_dom_sf"/>
</dbReference>
<dbReference type="InterPro" id="IPR041121">
    <property type="entry name" value="SDH_C"/>
</dbReference>
<dbReference type="InterPro" id="IPR011342">
    <property type="entry name" value="Shikimate_DH"/>
</dbReference>
<dbReference type="InterPro" id="IPR013708">
    <property type="entry name" value="Shikimate_DH-bd_N"/>
</dbReference>
<dbReference type="InterPro" id="IPR022893">
    <property type="entry name" value="Shikimate_DH_fam"/>
</dbReference>
<dbReference type="InterPro" id="IPR006151">
    <property type="entry name" value="Shikm_DH/Glu-tRNA_Rdtase"/>
</dbReference>
<dbReference type="NCBIfam" id="TIGR00507">
    <property type="entry name" value="aroE"/>
    <property type="match status" value="1"/>
</dbReference>
<dbReference type="NCBIfam" id="NF001314">
    <property type="entry name" value="PRK00258.2-2"/>
    <property type="match status" value="1"/>
</dbReference>
<dbReference type="NCBIfam" id="NF001319">
    <property type="entry name" value="PRK00258.3-3"/>
    <property type="match status" value="1"/>
</dbReference>
<dbReference type="PANTHER" id="PTHR21089:SF1">
    <property type="entry name" value="BIFUNCTIONAL 3-DEHYDROQUINATE DEHYDRATASE_SHIKIMATE DEHYDROGENASE, CHLOROPLASTIC"/>
    <property type="match status" value="1"/>
</dbReference>
<dbReference type="PANTHER" id="PTHR21089">
    <property type="entry name" value="SHIKIMATE DEHYDROGENASE"/>
    <property type="match status" value="1"/>
</dbReference>
<dbReference type="Pfam" id="PF18317">
    <property type="entry name" value="SDH_C"/>
    <property type="match status" value="1"/>
</dbReference>
<dbReference type="Pfam" id="PF01488">
    <property type="entry name" value="Shikimate_DH"/>
    <property type="match status" value="1"/>
</dbReference>
<dbReference type="Pfam" id="PF08501">
    <property type="entry name" value="Shikimate_dh_N"/>
    <property type="match status" value="1"/>
</dbReference>
<dbReference type="SUPFAM" id="SSF53223">
    <property type="entry name" value="Aminoacid dehydrogenase-like, N-terminal domain"/>
    <property type="match status" value="1"/>
</dbReference>
<dbReference type="SUPFAM" id="SSF51735">
    <property type="entry name" value="NAD(P)-binding Rossmann-fold domains"/>
    <property type="match status" value="1"/>
</dbReference>
<name>AROE_METST</name>
<accession>Q2NGK8</accession>
<sequence length="283" mass="31401">MITGKTLITGVIGHPIEHSFSPPMHNNAYKLMNMDYKYVPFHVEVENLKHVITSAKTLNIKGLNVTIPHKTTIIPYLDEIDETAEKIGAVNTINFKDGIAKGYNTDGIGAIVSIEKYTSLKDKNIMIIGAGGASKAITFTLLNKNINQLIVANRSKDNAQKLITNLKNQTNFENIDFINIKKTDNVIDDVDIIINTTPIGMYPKDEVAPPIKTDKISSKHTVMDIIYNPLETQLLKQSKKQGATTIPGTHMLINQGIKAFEIFTGKTPSYESFEKPLLKHLQG</sequence>
<comment type="function">
    <text evidence="1">Involved in the biosynthesis of the chorismate, which leads to the biosynthesis of aromatic amino acids. Catalyzes the reversible NADPH linked reduction of 3-dehydroshikimate (DHSA) to yield shikimate (SA).</text>
</comment>
<comment type="catalytic activity">
    <reaction evidence="1">
        <text>shikimate + NADP(+) = 3-dehydroshikimate + NADPH + H(+)</text>
        <dbReference type="Rhea" id="RHEA:17737"/>
        <dbReference type="ChEBI" id="CHEBI:15378"/>
        <dbReference type="ChEBI" id="CHEBI:16630"/>
        <dbReference type="ChEBI" id="CHEBI:36208"/>
        <dbReference type="ChEBI" id="CHEBI:57783"/>
        <dbReference type="ChEBI" id="CHEBI:58349"/>
        <dbReference type="EC" id="1.1.1.25"/>
    </reaction>
</comment>
<comment type="pathway">
    <text evidence="1">Metabolic intermediate biosynthesis; chorismate biosynthesis; chorismate from D-erythrose 4-phosphate and phosphoenolpyruvate: step 4/7.</text>
</comment>
<comment type="subunit">
    <text evidence="1">Homodimer.</text>
</comment>
<comment type="similarity">
    <text evidence="1">Belongs to the shikimate dehydrogenase family.</text>
</comment>
<reference key="1">
    <citation type="journal article" date="2006" name="J. Bacteriol.">
        <title>The genome sequence of Methanosphaera stadtmanae reveals why this human intestinal archaeon is restricted to methanol and H2 for methane formation and ATP synthesis.</title>
        <authorList>
            <person name="Fricke W.F."/>
            <person name="Seedorf H."/>
            <person name="Henne A."/>
            <person name="Kruer M."/>
            <person name="Liesegang H."/>
            <person name="Hedderich R."/>
            <person name="Gottschalk G."/>
            <person name="Thauer R.K."/>
        </authorList>
    </citation>
    <scope>NUCLEOTIDE SEQUENCE [LARGE SCALE GENOMIC DNA]</scope>
    <source>
        <strain>ATCC 43021 / DSM 3091 / JCM 11832 / MCB-3</strain>
    </source>
</reference>
<organism>
    <name type="scientific">Methanosphaera stadtmanae (strain ATCC 43021 / DSM 3091 / JCM 11832 / MCB-3)</name>
    <dbReference type="NCBI Taxonomy" id="339860"/>
    <lineage>
        <taxon>Archaea</taxon>
        <taxon>Methanobacteriati</taxon>
        <taxon>Methanobacteriota</taxon>
        <taxon>Methanomada group</taxon>
        <taxon>Methanobacteria</taxon>
        <taxon>Methanobacteriales</taxon>
        <taxon>Methanobacteriaceae</taxon>
        <taxon>Methanosphaera</taxon>
    </lineage>
</organism>
<proteinExistence type="inferred from homology"/>
<protein>
    <recommendedName>
        <fullName evidence="1">Shikimate dehydrogenase (NADP(+))</fullName>
        <shortName evidence="1">SDH</shortName>
        <ecNumber evidence="1">1.1.1.25</ecNumber>
    </recommendedName>
</protein>
<feature type="chain" id="PRO_1000021307" description="Shikimate dehydrogenase (NADP(+))">
    <location>
        <begin position="1"/>
        <end position="283"/>
    </location>
</feature>
<feature type="active site" description="Proton acceptor" evidence="1">
    <location>
        <position position="70"/>
    </location>
</feature>
<feature type="binding site" evidence="1">
    <location>
        <begin position="19"/>
        <end position="21"/>
    </location>
    <ligand>
        <name>shikimate</name>
        <dbReference type="ChEBI" id="CHEBI:36208"/>
    </ligand>
</feature>
<feature type="binding site" evidence="1">
    <location>
        <position position="66"/>
    </location>
    <ligand>
        <name>shikimate</name>
        <dbReference type="ChEBI" id="CHEBI:36208"/>
    </ligand>
</feature>
<feature type="binding site" evidence="1">
    <location>
        <position position="82"/>
    </location>
    <ligand>
        <name>NADP(+)</name>
        <dbReference type="ChEBI" id="CHEBI:58349"/>
    </ligand>
</feature>
<feature type="binding site" evidence="1">
    <location>
        <position position="91"/>
    </location>
    <ligand>
        <name>shikimate</name>
        <dbReference type="ChEBI" id="CHEBI:36208"/>
    </ligand>
</feature>
<feature type="binding site" evidence="1">
    <location>
        <position position="106"/>
    </location>
    <ligand>
        <name>shikimate</name>
        <dbReference type="ChEBI" id="CHEBI:36208"/>
    </ligand>
</feature>
<feature type="binding site" evidence="1">
    <location>
        <begin position="129"/>
        <end position="133"/>
    </location>
    <ligand>
        <name>NADP(+)</name>
        <dbReference type="ChEBI" id="CHEBI:58349"/>
    </ligand>
</feature>
<feature type="binding site" evidence="1">
    <location>
        <position position="225"/>
    </location>
    <ligand>
        <name>NADP(+)</name>
        <dbReference type="ChEBI" id="CHEBI:58349"/>
    </ligand>
</feature>
<feature type="binding site" evidence="1">
    <location>
        <position position="227"/>
    </location>
    <ligand>
        <name>shikimate</name>
        <dbReference type="ChEBI" id="CHEBI:36208"/>
    </ligand>
</feature>
<feature type="binding site" evidence="1">
    <location>
        <position position="248"/>
    </location>
    <ligand>
        <name>NADP(+)</name>
        <dbReference type="ChEBI" id="CHEBI:58349"/>
    </ligand>
</feature>
<gene>
    <name evidence="1" type="primary">aroE</name>
    <name type="ordered locus">Msp_0647</name>
</gene>
<keyword id="KW-0028">Amino-acid biosynthesis</keyword>
<keyword id="KW-0057">Aromatic amino acid biosynthesis</keyword>
<keyword id="KW-0521">NADP</keyword>
<keyword id="KW-0560">Oxidoreductase</keyword>
<keyword id="KW-1185">Reference proteome</keyword>
<evidence type="ECO:0000255" key="1">
    <source>
        <dbReference type="HAMAP-Rule" id="MF_00222"/>
    </source>
</evidence>